<sequence length="95" mass="9912">MALKPLGDRIIVRFEETEEKTASGFVLAGASHETTKTAEVLAVGEGTRTLTGELIAPSVAVGDKVLVENGTGISVKDGEDYVSIIREADILAVLA</sequence>
<organism>
    <name type="scientific">Streptococcus thermophilus (strain ATCC BAA-491 / LMD-9)</name>
    <dbReference type="NCBI Taxonomy" id="322159"/>
    <lineage>
        <taxon>Bacteria</taxon>
        <taxon>Bacillati</taxon>
        <taxon>Bacillota</taxon>
        <taxon>Bacilli</taxon>
        <taxon>Lactobacillales</taxon>
        <taxon>Streptococcaceae</taxon>
        <taxon>Streptococcus</taxon>
    </lineage>
</organism>
<comment type="function">
    <text evidence="1">Together with the chaperonin GroEL, plays an essential role in assisting protein folding. The GroEL-GroES system forms a nano-cage that allows encapsulation of the non-native substrate proteins and provides a physical environment optimized to promote and accelerate protein folding. GroES binds to the apical surface of the GroEL ring, thereby capping the opening of the GroEL channel.</text>
</comment>
<comment type="subunit">
    <text evidence="1">Heptamer of 7 subunits arranged in a ring. Interacts with the chaperonin GroEL.</text>
</comment>
<comment type="subcellular location">
    <subcellularLocation>
        <location evidence="1">Cytoplasm</location>
    </subcellularLocation>
</comment>
<comment type="similarity">
    <text evidence="1">Belongs to the GroES chaperonin family.</text>
</comment>
<gene>
    <name evidence="1" type="primary">groES</name>
    <name evidence="1" type="synonym">groS</name>
    <name type="ordered locus">STER_0252</name>
</gene>
<reference key="1">
    <citation type="journal article" date="2006" name="Proc. Natl. Acad. Sci. U.S.A.">
        <title>Comparative genomics of the lactic acid bacteria.</title>
        <authorList>
            <person name="Makarova K.S."/>
            <person name="Slesarev A."/>
            <person name="Wolf Y.I."/>
            <person name="Sorokin A."/>
            <person name="Mirkin B."/>
            <person name="Koonin E.V."/>
            <person name="Pavlov A."/>
            <person name="Pavlova N."/>
            <person name="Karamychev V."/>
            <person name="Polouchine N."/>
            <person name="Shakhova V."/>
            <person name="Grigoriev I."/>
            <person name="Lou Y."/>
            <person name="Rohksar D."/>
            <person name="Lucas S."/>
            <person name="Huang K."/>
            <person name="Goodstein D.M."/>
            <person name="Hawkins T."/>
            <person name="Plengvidhya V."/>
            <person name="Welker D."/>
            <person name="Hughes J."/>
            <person name="Goh Y."/>
            <person name="Benson A."/>
            <person name="Baldwin K."/>
            <person name="Lee J.-H."/>
            <person name="Diaz-Muniz I."/>
            <person name="Dosti B."/>
            <person name="Smeianov V."/>
            <person name="Wechter W."/>
            <person name="Barabote R."/>
            <person name="Lorca G."/>
            <person name="Altermann E."/>
            <person name="Barrangou R."/>
            <person name="Ganesan B."/>
            <person name="Xie Y."/>
            <person name="Rawsthorne H."/>
            <person name="Tamir D."/>
            <person name="Parker C."/>
            <person name="Breidt F."/>
            <person name="Broadbent J.R."/>
            <person name="Hutkins R."/>
            <person name="O'Sullivan D."/>
            <person name="Steele J."/>
            <person name="Unlu G."/>
            <person name="Saier M.H. Jr."/>
            <person name="Klaenhammer T."/>
            <person name="Richardson P."/>
            <person name="Kozyavkin S."/>
            <person name="Weimer B.C."/>
            <person name="Mills D.A."/>
        </authorList>
    </citation>
    <scope>NUCLEOTIDE SEQUENCE [LARGE SCALE GENOMIC DNA]</scope>
    <source>
        <strain>ATCC BAA-491 / LMD-9</strain>
    </source>
</reference>
<name>CH10_STRTD</name>
<accession>Q03MK4</accession>
<proteinExistence type="inferred from homology"/>
<feature type="chain" id="PRO_1000025382" description="Co-chaperonin GroES">
    <location>
        <begin position="1"/>
        <end position="95"/>
    </location>
</feature>
<keyword id="KW-0143">Chaperone</keyword>
<keyword id="KW-0963">Cytoplasm</keyword>
<protein>
    <recommendedName>
        <fullName evidence="1">Co-chaperonin GroES</fullName>
    </recommendedName>
    <alternativeName>
        <fullName evidence="1">10 kDa chaperonin</fullName>
    </alternativeName>
    <alternativeName>
        <fullName evidence="1">Chaperonin-10</fullName>
        <shortName evidence="1">Cpn10</shortName>
    </alternativeName>
</protein>
<dbReference type="EMBL" id="CP000419">
    <property type="protein sequence ID" value="ABJ65568.1"/>
    <property type="molecule type" value="Genomic_DNA"/>
</dbReference>
<dbReference type="RefSeq" id="WP_002949332.1">
    <property type="nucleotide sequence ID" value="NC_008532.1"/>
</dbReference>
<dbReference type="SMR" id="Q03MK4"/>
<dbReference type="GeneID" id="66898139"/>
<dbReference type="KEGG" id="ste:STER_0252"/>
<dbReference type="HOGENOM" id="CLU_132825_1_2_9"/>
<dbReference type="GO" id="GO:0005737">
    <property type="term" value="C:cytoplasm"/>
    <property type="evidence" value="ECO:0007669"/>
    <property type="project" value="UniProtKB-SubCell"/>
</dbReference>
<dbReference type="GO" id="GO:0005524">
    <property type="term" value="F:ATP binding"/>
    <property type="evidence" value="ECO:0007669"/>
    <property type="project" value="InterPro"/>
</dbReference>
<dbReference type="GO" id="GO:0046872">
    <property type="term" value="F:metal ion binding"/>
    <property type="evidence" value="ECO:0007669"/>
    <property type="project" value="TreeGrafter"/>
</dbReference>
<dbReference type="GO" id="GO:0044183">
    <property type="term" value="F:protein folding chaperone"/>
    <property type="evidence" value="ECO:0007669"/>
    <property type="project" value="InterPro"/>
</dbReference>
<dbReference type="GO" id="GO:0051087">
    <property type="term" value="F:protein-folding chaperone binding"/>
    <property type="evidence" value="ECO:0007669"/>
    <property type="project" value="TreeGrafter"/>
</dbReference>
<dbReference type="GO" id="GO:0051082">
    <property type="term" value="F:unfolded protein binding"/>
    <property type="evidence" value="ECO:0007669"/>
    <property type="project" value="TreeGrafter"/>
</dbReference>
<dbReference type="GO" id="GO:0051085">
    <property type="term" value="P:chaperone cofactor-dependent protein refolding"/>
    <property type="evidence" value="ECO:0007669"/>
    <property type="project" value="TreeGrafter"/>
</dbReference>
<dbReference type="CDD" id="cd00320">
    <property type="entry name" value="cpn10"/>
    <property type="match status" value="1"/>
</dbReference>
<dbReference type="FunFam" id="2.30.33.40:FF:000001">
    <property type="entry name" value="10 kDa chaperonin"/>
    <property type="match status" value="1"/>
</dbReference>
<dbReference type="Gene3D" id="2.30.33.40">
    <property type="entry name" value="GroES chaperonin"/>
    <property type="match status" value="1"/>
</dbReference>
<dbReference type="HAMAP" id="MF_00580">
    <property type="entry name" value="CH10"/>
    <property type="match status" value="1"/>
</dbReference>
<dbReference type="InterPro" id="IPR020818">
    <property type="entry name" value="Chaperonin_GroES"/>
</dbReference>
<dbReference type="InterPro" id="IPR037124">
    <property type="entry name" value="Chaperonin_GroES_sf"/>
</dbReference>
<dbReference type="InterPro" id="IPR018369">
    <property type="entry name" value="Chaprnonin_Cpn10_CS"/>
</dbReference>
<dbReference type="InterPro" id="IPR011032">
    <property type="entry name" value="GroES-like_sf"/>
</dbReference>
<dbReference type="NCBIfam" id="NF001528">
    <property type="entry name" value="PRK00364.1-4"/>
    <property type="match status" value="1"/>
</dbReference>
<dbReference type="PANTHER" id="PTHR10772">
    <property type="entry name" value="10 KDA HEAT SHOCK PROTEIN"/>
    <property type="match status" value="1"/>
</dbReference>
<dbReference type="PANTHER" id="PTHR10772:SF58">
    <property type="entry name" value="CO-CHAPERONIN GROES"/>
    <property type="match status" value="1"/>
</dbReference>
<dbReference type="Pfam" id="PF00166">
    <property type="entry name" value="Cpn10"/>
    <property type="match status" value="1"/>
</dbReference>
<dbReference type="PRINTS" id="PR00297">
    <property type="entry name" value="CHAPERONIN10"/>
</dbReference>
<dbReference type="SMART" id="SM00883">
    <property type="entry name" value="Cpn10"/>
    <property type="match status" value="1"/>
</dbReference>
<dbReference type="SUPFAM" id="SSF50129">
    <property type="entry name" value="GroES-like"/>
    <property type="match status" value="1"/>
</dbReference>
<dbReference type="PROSITE" id="PS00681">
    <property type="entry name" value="CHAPERONINS_CPN10"/>
    <property type="match status" value="1"/>
</dbReference>
<evidence type="ECO:0000255" key="1">
    <source>
        <dbReference type="HAMAP-Rule" id="MF_00580"/>
    </source>
</evidence>